<sequence length="542" mass="57085">MAKNIKFDIEARDGLKRGVDALANAVKVTLGPKGRNVIIGKSFGGPTVTKDGVTVAKEIELQDPLENMGAQMVKEVASKTNDLAGDGTTTATVLAQAIVKEGLKNVAAGANPMDLKRGIDKAVEAIVADLTKQAKVVGSDSEKIKQIASISANNDEVIGELIANAFAKVGKEGVITVEEAKGTDTYVDVVEGMQFDRGYLSPYFVTNPEKMDAELENPYILLYDKKVSSLKELLPVLEPVAQSGKPLLIIAEDVDGEALSTLVVNKLRGALKIAAVKAPGFGDRRKAMLEDIAILTGGTVISEERGFTLENTTIEMLGTAKRVTIDKDNTTIVSGAGEADMIKNRVNQIKGQMEASTSDYDKEKLQERLAKLAGGVAVLYVGAASEVEMKEKKDRVDDALHATRAAVEEGIVAGGGVALLRAKNVLKDIKADNADEATGIQIVSRAVEAPLRTIVENAGLEGSVVVAKVAEGSGDFGYNAKTDEYVDMLKAGIIDPKKVTRVALENAASVAGMILTTECALVEIKEENAGGGQMGGGMPGMM</sequence>
<dbReference type="EC" id="5.6.1.7" evidence="1"/>
<dbReference type="EMBL" id="AM398681">
    <property type="protein sequence ID" value="CAL44049.1"/>
    <property type="molecule type" value="Genomic_DNA"/>
</dbReference>
<dbReference type="RefSeq" id="WP_011964087.1">
    <property type="nucleotide sequence ID" value="NC_009613.3"/>
</dbReference>
<dbReference type="RefSeq" id="YP_001296851.1">
    <property type="nucleotide sequence ID" value="NC_009613.3"/>
</dbReference>
<dbReference type="SMR" id="A6H125"/>
<dbReference type="STRING" id="402612.FP1985"/>
<dbReference type="EnsemblBacteria" id="CAL44049">
    <property type="protein sequence ID" value="CAL44049"/>
    <property type="gene ID" value="FP1985"/>
</dbReference>
<dbReference type="GeneID" id="66551832"/>
<dbReference type="KEGG" id="fps:FP1985"/>
<dbReference type="PATRIC" id="fig|402612.5.peg.2009"/>
<dbReference type="eggNOG" id="COG0459">
    <property type="taxonomic scope" value="Bacteria"/>
</dbReference>
<dbReference type="HOGENOM" id="CLU_016503_3_0_10"/>
<dbReference type="OrthoDB" id="9766614at2"/>
<dbReference type="Proteomes" id="UP000006394">
    <property type="component" value="Chromosome"/>
</dbReference>
<dbReference type="GO" id="GO:0005737">
    <property type="term" value="C:cytoplasm"/>
    <property type="evidence" value="ECO:0007669"/>
    <property type="project" value="UniProtKB-SubCell"/>
</dbReference>
<dbReference type="GO" id="GO:0005524">
    <property type="term" value="F:ATP binding"/>
    <property type="evidence" value="ECO:0007669"/>
    <property type="project" value="UniProtKB-UniRule"/>
</dbReference>
<dbReference type="GO" id="GO:0140662">
    <property type="term" value="F:ATP-dependent protein folding chaperone"/>
    <property type="evidence" value="ECO:0007669"/>
    <property type="project" value="InterPro"/>
</dbReference>
<dbReference type="GO" id="GO:0016853">
    <property type="term" value="F:isomerase activity"/>
    <property type="evidence" value="ECO:0007669"/>
    <property type="project" value="UniProtKB-KW"/>
</dbReference>
<dbReference type="GO" id="GO:0051082">
    <property type="term" value="F:unfolded protein binding"/>
    <property type="evidence" value="ECO:0007669"/>
    <property type="project" value="UniProtKB-UniRule"/>
</dbReference>
<dbReference type="GO" id="GO:0042026">
    <property type="term" value="P:protein refolding"/>
    <property type="evidence" value="ECO:0007669"/>
    <property type="project" value="UniProtKB-UniRule"/>
</dbReference>
<dbReference type="CDD" id="cd03344">
    <property type="entry name" value="GroEL"/>
    <property type="match status" value="1"/>
</dbReference>
<dbReference type="FunFam" id="1.10.560.10:FF:000001">
    <property type="entry name" value="60 kDa chaperonin"/>
    <property type="match status" value="1"/>
</dbReference>
<dbReference type="FunFam" id="3.50.7.10:FF:000001">
    <property type="entry name" value="60 kDa chaperonin"/>
    <property type="match status" value="1"/>
</dbReference>
<dbReference type="Gene3D" id="3.50.7.10">
    <property type="entry name" value="GroEL"/>
    <property type="match status" value="1"/>
</dbReference>
<dbReference type="Gene3D" id="1.10.560.10">
    <property type="entry name" value="GroEL-like equatorial domain"/>
    <property type="match status" value="1"/>
</dbReference>
<dbReference type="Gene3D" id="3.30.260.10">
    <property type="entry name" value="TCP-1-like chaperonin intermediate domain"/>
    <property type="match status" value="1"/>
</dbReference>
<dbReference type="HAMAP" id="MF_00600">
    <property type="entry name" value="CH60"/>
    <property type="match status" value="1"/>
</dbReference>
<dbReference type="InterPro" id="IPR018370">
    <property type="entry name" value="Chaperonin_Cpn60_CS"/>
</dbReference>
<dbReference type="InterPro" id="IPR001844">
    <property type="entry name" value="Cpn60/GroEL"/>
</dbReference>
<dbReference type="InterPro" id="IPR002423">
    <property type="entry name" value="Cpn60/GroEL/TCP-1"/>
</dbReference>
<dbReference type="InterPro" id="IPR027409">
    <property type="entry name" value="GroEL-like_apical_dom_sf"/>
</dbReference>
<dbReference type="InterPro" id="IPR027413">
    <property type="entry name" value="GROEL-like_equatorial_sf"/>
</dbReference>
<dbReference type="InterPro" id="IPR027410">
    <property type="entry name" value="TCP-1-like_intermed_sf"/>
</dbReference>
<dbReference type="NCBIfam" id="TIGR02348">
    <property type="entry name" value="GroEL"/>
    <property type="match status" value="1"/>
</dbReference>
<dbReference type="NCBIfam" id="NF000592">
    <property type="entry name" value="PRK00013.1"/>
    <property type="match status" value="1"/>
</dbReference>
<dbReference type="NCBIfam" id="NF009487">
    <property type="entry name" value="PRK12849.1"/>
    <property type="match status" value="1"/>
</dbReference>
<dbReference type="NCBIfam" id="NF009488">
    <property type="entry name" value="PRK12850.1"/>
    <property type="match status" value="1"/>
</dbReference>
<dbReference type="NCBIfam" id="NF009489">
    <property type="entry name" value="PRK12851.1"/>
    <property type="match status" value="1"/>
</dbReference>
<dbReference type="PANTHER" id="PTHR45633">
    <property type="entry name" value="60 KDA HEAT SHOCK PROTEIN, MITOCHONDRIAL"/>
    <property type="match status" value="1"/>
</dbReference>
<dbReference type="Pfam" id="PF00118">
    <property type="entry name" value="Cpn60_TCP1"/>
    <property type="match status" value="1"/>
</dbReference>
<dbReference type="PRINTS" id="PR00298">
    <property type="entry name" value="CHAPERONIN60"/>
</dbReference>
<dbReference type="SUPFAM" id="SSF52029">
    <property type="entry name" value="GroEL apical domain-like"/>
    <property type="match status" value="1"/>
</dbReference>
<dbReference type="SUPFAM" id="SSF48592">
    <property type="entry name" value="GroEL equatorial domain-like"/>
    <property type="match status" value="1"/>
</dbReference>
<dbReference type="SUPFAM" id="SSF54849">
    <property type="entry name" value="GroEL-intermediate domain like"/>
    <property type="match status" value="1"/>
</dbReference>
<dbReference type="PROSITE" id="PS00296">
    <property type="entry name" value="CHAPERONINS_CPN60"/>
    <property type="match status" value="1"/>
</dbReference>
<protein>
    <recommendedName>
        <fullName evidence="1">Chaperonin GroEL</fullName>
        <ecNumber evidence="1">5.6.1.7</ecNumber>
    </recommendedName>
    <alternativeName>
        <fullName evidence="1">60 kDa chaperonin</fullName>
    </alternativeName>
    <alternativeName>
        <fullName evidence="1">Chaperonin-60</fullName>
        <shortName evidence="1">Cpn60</shortName>
    </alternativeName>
</protein>
<accession>A6H125</accession>
<reference key="1">
    <citation type="journal article" date="2007" name="Nat. Biotechnol.">
        <title>Complete genome sequence of the fish pathogen Flavobacterium psychrophilum.</title>
        <authorList>
            <person name="Duchaud E."/>
            <person name="Boussaha M."/>
            <person name="Loux V."/>
            <person name="Bernardet J.-F."/>
            <person name="Michel C."/>
            <person name="Kerouault B."/>
            <person name="Mondot S."/>
            <person name="Nicolas P."/>
            <person name="Bossy R."/>
            <person name="Caron C."/>
            <person name="Bessieres P."/>
            <person name="Gibrat J.-F."/>
            <person name="Claverol S."/>
            <person name="Dumetz F."/>
            <person name="Le Henaff M."/>
            <person name="Benmansour A."/>
        </authorList>
    </citation>
    <scope>NUCLEOTIDE SEQUENCE [LARGE SCALE GENOMIC DNA]</scope>
    <source>
        <strain>ATCC 49511 / DSM 21280 / CIP 103535 / JIP02/86</strain>
    </source>
</reference>
<proteinExistence type="inferred from homology"/>
<feature type="chain" id="PRO_1000025779" description="Chaperonin GroEL">
    <location>
        <begin position="1"/>
        <end position="542"/>
    </location>
</feature>
<feature type="binding site" evidence="1">
    <location>
        <begin position="29"/>
        <end position="32"/>
    </location>
    <ligand>
        <name>ATP</name>
        <dbReference type="ChEBI" id="CHEBI:30616"/>
    </ligand>
</feature>
<feature type="binding site" evidence="1">
    <location>
        <position position="50"/>
    </location>
    <ligand>
        <name>ATP</name>
        <dbReference type="ChEBI" id="CHEBI:30616"/>
    </ligand>
</feature>
<feature type="binding site" evidence="1">
    <location>
        <begin position="86"/>
        <end position="90"/>
    </location>
    <ligand>
        <name>ATP</name>
        <dbReference type="ChEBI" id="CHEBI:30616"/>
    </ligand>
</feature>
<feature type="binding site" evidence="1">
    <location>
        <position position="415"/>
    </location>
    <ligand>
        <name>ATP</name>
        <dbReference type="ChEBI" id="CHEBI:30616"/>
    </ligand>
</feature>
<feature type="binding site" evidence="1">
    <location>
        <position position="495"/>
    </location>
    <ligand>
        <name>ATP</name>
        <dbReference type="ChEBI" id="CHEBI:30616"/>
    </ligand>
</feature>
<evidence type="ECO:0000255" key="1">
    <source>
        <dbReference type="HAMAP-Rule" id="MF_00600"/>
    </source>
</evidence>
<name>CH60_FLAPJ</name>
<organism>
    <name type="scientific">Flavobacterium psychrophilum (strain ATCC 49511 / DSM 21280 / CIP 103535 / JIP02/86)</name>
    <dbReference type="NCBI Taxonomy" id="402612"/>
    <lineage>
        <taxon>Bacteria</taxon>
        <taxon>Pseudomonadati</taxon>
        <taxon>Bacteroidota</taxon>
        <taxon>Flavobacteriia</taxon>
        <taxon>Flavobacteriales</taxon>
        <taxon>Flavobacteriaceae</taxon>
        <taxon>Flavobacterium</taxon>
    </lineage>
</organism>
<comment type="function">
    <text evidence="1">Together with its co-chaperonin GroES, plays an essential role in assisting protein folding. The GroEL-GroES system forms a nano-cage that allows encapsulation of the non-native substrate proteins and provides a physical environment optimized to promote and accelerate protein folding.</text>
</comment>
<comment type="catalytic activity">
    <reaction evidence="1">
        <text>ATP + H2O + a folded polypeptide = ADP + phosphate + an unfolded polypeptide.</text>
        <dbReference type="EC" id="5.6.1.7"/>
    </reaction>
</comment>
<comment type="subunit">
    <text evidence="1">Forms a cylinder of 14 subunits composed of two heptameric rings stacked back-to-back. Interacts with the co-chaperonin GroES.</text>
</comment>
<comment type="subcellular location">
    <subcellularLocation>
        <location evidence="1">Cytoplasm</location>
    </subcellularLocation>
</comment>
<comment type="similarity">
    <text evidence="1">Belongs to the chaperonin (HSP60) family.</text>
</comment>
<keyword id="KW-0067">ATP-binding</keyword>
<keyword id="KW-0143">Chaperone</keyword>
<keyword id="KW-0963">Cytoplasm</keyword>
<keyword id="KW-0413">Isomerase</keyword>
<keyword id="KW-0547">Nucleotide-binding</keyword>
<keyword id="KW-1185">Reference proteome</keyword>
<gene>
    <name evidence="1" type="primary">groEL</name>
    <name evidence="1" type="synonym">groL</name>
    <name type="ordered locus">FP1985</name>
</gene>